<dbReference type="EMBL" id="CP000284">
    <property type="protein sequence ID" value="ABE48917.1"/>
    <property type="molecule type" value="Genomic_DNA"/>
</dbReference>
<dbReference type="RefSeq" id="WP_011479014.1">
    <property type="nucleotide sequence ID" value="NC_007947.1"/>
</dbReference>
<dbReference type="STRING" id="265072.Mfla_0647"/>
<dbReference type="KEGG" id="mfa:Mfla_0647"/>
<dbReference type="eggNOG" id="COG1970">
    <property type="taxonomic scope" value="Bacteria"/>
</dbReference>
<dbReference type="HOGENOM" id="CLU_095787_2_3_4"/>
<dbReference type="OrthoDB" id="9810350at2"/>
<dbReference type="Proteomes" id="UP000002440">
    <property type="component" value="Chromosome"/>
</dbReference>
<dbReference type="GO" id="GO:0005886">
    <property type="term" value="C:plasma membrane"/>
    <property type="evidence" value="ECO:0007669"/>
    <property type="project" value="UniProtKB-SubCell"/>
</dbReference>
<dbReference type="GO" id="GO:0008381">
    <property type="term" value="F:mechanosensitive monoatomic ion channel activity"/>
    <property type="evidence" value="ECO:0007669"/>
    <property type="project" value="UniProtKB-UniRule"/>
</dbReference>
<dbReference type="Gene3D" id="1.10.1200.120">
    <property type="entry name" value="Large-conductance mechanosensitive channel, MscL, domain 1"/>
    <property type="match status" value="1"/>
</dbReference>
<dbReference type="HAMAP" id="MF_00115">
    <property type="entry name" value="MscL"/>
    <property type="match status" value="1"/>
</dbReference>
<dbReference type="InterPro" id="IPR019823">
    <property type="entry name" value="Mechanosensitive_channel_CS"/>
</dbReference>
<dbReference type="InterPro" id="IPR001185">
    <property type="entry name" value="MS_channel"/>
</dbReference>
<dbReference type="InterPro" id="IPR037673">
    <property type="entry name" value="MSC/AndL"/>
</dbReference>
<dbReference type="InterPro" id="IPR036019">
    <property type="entry name" value="MscL_channel"/>
</dbReference>
<dbReference type="NCBIfam" id="TIGR00220">
    <property type="entry name" value="mscL"/>
    <property type="match status" value="1"/>
</dbReference>
<dbReference type="NCBIfam" id="NF001843">
    <property type="entry name" value="PRK00567.1-4"/>
    <property type="match status" value="1"/>
</dbReference>
<dbReference type="NCBIfam" id="NF010557">
    <property type="entry name" value="PRK13952.1"/>
    <property type="match status" value="1"/>
</dbReference>
<dbReference type="PANTHER" id="PTHR30266:SF2">
    <property type="entry name" value="LARGE-CONDUCTANCE MECHANOSENSITIVE CHANNEL"/>
    <property type="match status" value="1"/>
</dbReference>
<dbReference type="PANTHER" id="PTHR30266">
    <property type="entry name" value="MECHANOSENSITIVE CHANNEL MSCL"/>
    <property type="match status" value="1"/>
</dbReference>
<dbReference type="Pfam" id="PF01741">
    <property type="entry name" value="MscL"/>
    <property type="match status" value="1"/>
</dbReference>
<dbReference type="PRINTS" id="PR01264">
    <property type="entry name" value="MECHCHANNEL"/>
</dbReference>
<dbReference type="SUPFAM" id="SSF81330">
    <property type="entry name" value="Gated mechanosensitive channel"/>
    <property type="match status" value="1"/>
</dbReference>
<dbReference type="PROSITE" id="PS01327">
    <property type="entry name" value="MSCL"/>
    <property type="match status" value="1"/>
</dbReference>
<comment type="function">
    <text evidence="1">Channel that opens in response to stretch forces in the membrane lipid bilayer. May participate in the regulation of osmotic pressure changes within the cell.</text>
</comment>
<comment type="subunit">
    <text evidence="1">Homopentamer.</text>
</comment>
<comment type="subcellular location">
    <subcellularLocation>
        <location evidence="1">Cell inner membrane</location>
        <topology evidence="1">Multi-pass membrane protein</topology>
    </subcellularLocation>
</comment>
<comment type="similarity">
    <text evidence="1">Belongs to the MscL family.</text>
</comment>
<gene>
    <name evidence="1" type="primary">mscL</name>
    <name type="ordered locus">Mfla_0647</name>
</gene>
<evidence type="ECO:0000255" key="1">
    <source>
        <dbReference type="HAMAP-Rule" id="MF_00115"/>
    </source>
</evidence>
<organism>
    <name type="scientific">Methylobacillus flagellatus (strain ATCC 51484 / DSM 6875 / VKM B-1610 / KT)</name>
    <dbReference type="NCBI Taxonomy" id="265072"/>
    <lineage>
        <taxon>Bacteria</taxon>
        <taxon>Pseudomonadati</taxon>
        <taxon>Pseudomonadota</taxon>
        <taxon>Betaproteobacteria</taxon>
        <taxon>Nitrosomonadales</taxon>
        <taxon>Methylophilaceae</taxon>
        <taxon>Methylobacillus</taxon>
    </lineage>
</organism>
<keyword id="KW-0997">Cell inner membrane</keyword>
<keyword id="KW-1003">Cell membrane</keyword>
<keyword id="KW-0407">Ion channel</keyword>
<keyword id="KW-0406">Ion transport</keyword>
<keyword id="KW-0472">Membrane</keyword>
<keyword id="KW-1185">Reference proteome</keyword>
<keyword id="KW-0812">Transmembrane</keyword>
<keyword id="KW-1133">Transmembrane helix</keyword>
<keyword id="KW-0813">Transport</keyword>
<accession>Q1H3M0</accession>
<name>MSCL_METFK</name>
<reference key="1">
    <citation type="submission" date="2006-03" db="EMBL/GenBank/DDBJ databases">
        <title>Complete sequence of Methylobacillus flagellatus KT.</title>
        <authorList>
            <consortium name="US DOE Joint Genome Institute"/>
            <person name="Copeland A."/>
            <person name="Lucas S."/>
            <person name="Lapidus A."/>
            <person name="Barry K."/>
            <person name="Detter J.C."/>
            <person name="Glavina del Rio T."/>
            <person name="Hammon N."/>
            <person name="Israni S."/>
            <person name="Dalin E."/>
            <person name="Tice H."/>
            <person name="Pitluck S."/>
            <person name="Brettin T."/>
            <person name="Bruce D."/>
            <person name="Han C."/>
            <person name="Tapia R."/>
            <person name="Saunders E."/>
            <person name="Gilna P."/>
            <person name="Schmutz J."/>
            <person name="Larimer F."/>
            <person name="Land M."/>
            <person name="Kyrpides N."/>
            <person name="Anderson I."/>
            <person name="Richardson P."/>
        </authorList>
    </citation>
    <scope>NUCLEOTIDE SEQUENCE [LARGE SCALE GENOMIC DNA]</scope>
    <source>
        <strain>ATCC 51484 / DSM 6875 / VKM B-1610 / KT</strain>
    </source>
</reference>
<proteinExistence type="inferred from homology"/>
<sequence length="139" mass="14734">MFKEFKAFAMRGNVVDMAVGIIIGAAFGAIVKSLVDDVIMPPIGLLLGNVDFSNLFIVLKDGAEVAPPYASVAAAQAAGAVTLNYGLFINAVVSFTIVAFAVFLLIRAINKLKAEEPAAPEVTPEDIVLLREIRDALKK</sequence>
<feature type="chain" id="PRO_1000015397" description="Large-conductance mechanosensitive channel">
    <location>
        <begin position="1"/>
        <end position="139"/>
    </location>
</feature>
<feature type="transmembrane region" description="Helical" evidence="1">
    <location>
        <begin position="14"/>
        <end position="34"/>
    </location>
</feature>
<feature type="transmembrane region" description="Helical" evidence="1">
    <location>
        <begin position="86"/>
        <end position="106"/>
    </location>
</feature>
<protein>
    <recommendedName>
        <fullName evidence="1">Large-conductance mechanosensitive channel</fullName>
    </recommendedName>
</protein>